<accession>Q9FLP0</accession>
<protein>
    <recommendedName>
        <fullName>65-kDa microtubule-associated protein 1</fullName>
        <shortName>AtMAP65-1</shortName>
    </recommendedName>
</protein>
<gene>
    <name type="primary">MAP65-1</name>
    <name type="ordered locus">At5g55230</name>
    <name type="ORF">MCO15.18</name>
</gene>
<evidence type="ECO:0000255" key="1"/>
<evidence type="ECO:0000256" key="2">
    <source>
        <dbReference type="SAM" id="MobiDB-lite"/>
    </source>
</evidence>
<evidence type="ECO:0000269" key="3">
    <source>
    </source>
</evidence>
<evidence type="ECO:0000269" key="4">
    <source>
    </source>
</evidence>
<evidence type="ECO:0000269" key="5">
    <source>
    </source>
</evidence>
<evidence type="ECO:0000269" key="6">
    <source>
    </source>
</evidence>
<evidence type="ECO:0000269" key="7">
    <source>
    </source>
</evidence>
<evidence type="ECO:0000269" key="8">
    <source>
    </source>
</evidence>
<evidence type="ECO:0000269" key="9">
    <source>
    </source>
</evidence>
<evidence type="ECO:0000269" key="10">
    <source>
    </source>
</evidence>
<evidence type="ECO:0000269" key="11">
    <source>
    </source>
</evidence>
<evidence type="ECO:0000269" key="12">
    <source>
    </source>
</evidence>
<evidence type="ECO:0000269" key="13">
    <source>
    </source>
</evidence>
<evidence type="ECO:0000269" key="14">
    <source>
    </source>
</evidence>
<evidence type="ECO:0000305" key="15"/>
<evidence type="ECO:0007744" key="16">
    <source>
    </source>
</evidence>
<evidence type="ECO:0007744" key="17">
    <source>
    </source>
</evidence>
<feature type="chain" id="PRO_0000395472" description="65-kDa microtubule-associated protein 1">
    <location>
        <begin position="1"/>
        <end position="587"/>
    </location>
</feature>
<feature type="region of interest" description="Disordered" evidence="2">
    <location>
        <begin position="474"/>
        <end position="587"/>
    </location>
</feature>
<feature type="coiled-coil region" evidence="1">
    <location>
        <begin position="46"/>
        <end position="84"/>
    </location>
</feature>
<feature type="coiled-coil region" evidence="1">
    <location>
        <begin position="151"/>
        <end position="181"/>
    </location>
</feature>
<feature type="coiled-coil region" evidence="1">
    <location>
        <begin position="234"/>
        <end position="257"/>
    </location>
</feature>
<feature type="coiled-coil region" evidence="1">
    <location>
        <begin position="290"/>
        <end position="317"/>
    </location>
</feature>
<feature type="coiled-coil region" evidence="1">
    <location>
        <begin position="461"/>
        <end position="489"/>
    </location>
</feature>
<feature type="compositionally biased region" description="Basic and acidic residues" evidence="2">
    <location>
        <begin position="474"/>
        <end position="494"/>
    </location>
</feature>
<feature type="compositionally biased region" description="Polar residues" evidence="2">
    <location>
        <begin position="531"/>
        <end position="542"/>
    </location>
</feature>
<feature type="compositionally biased region" description="Basic and acidic residues" evidence="2">
    <location>
        <begin position="543"/>
        <end position="553"/>
    </location>
</feature>
<feature type="site" description="Microtubule binding">
    <location>
        <position position="409"/>
    </location>
</feature>
<feature type="site" description="Microtubule binding">
    <location>
        <position position="420"/>
    </location>
</feature>
<feature type="modified residue" description="Phosphoserine" evidence="10">
    <location>
        <position position="503"/>
    </location>
</feature>
<feature type="modified residue" description="Phosphothreonine" evidence="10">
    <location>
        <position position="526"/>
    </location>
</feature>
<feature type="modified residue" description="Phosphoserine" evidence="10">
    <location>
        <position position="532"/>
    </location>
</feature>
<feature type="modified residue" description="Phosphoserine" evidence="10">
    <location>
        <position position="540"/>
    </location>
</feature>
<feature type="modified residue" description="Phosphothreonine" evidence="10">
    <location>
        <position position="543"/>
    </location>
</feature>
<feature type="modified residue" description="Phosphothreonine" evidence="10">
    <location>
        <position position="552"/>
    </location>
</feature>
<feature type="modified residue" description="Phosphoserine" evidence="10">
    <location>
        <position position="573"/>
    </location>
</feature>
<feature type="modified residue" description="Phosphoserine" evidence="10">
    <location>
        <position position="576"/>
    </location>
</feature>
<feature type="modified residue" description="Phosphoserine" evidence="10 16 17">
    <location>
        <position position="586"/>
    </location>
</feature>
<feature type="mutagenesis site" description="Impaired microtubule binding." evidence="4">
    <original>A</original>
    <variation>D</variation>
    <location>
        <position position="409"/>
    </location>
</feature>
<feature type="mutagenesis site" description="Impaired microtubule binding." evidence="4">
    <original>A</original>
    <variation>V</variation>
    <location>
        <position position="420"/>
    </location>
</feature>
<feature type="mutagenesis site" description="Premature binding to microtubules traversing the central region of the metaphase spindle. Impaired microtubule binding and abnormal subcellular localization (e.g. reduced localization in spindle midzone during anaphase) leading to disturbed mitosis; when associated with A-526, A-532, A-540, A-543, A-552, A-573, A-576 and A-586." evidence="9 10">
    <original>S</original>
    <variation>A</variation>
    <location>
        <position position="503"/>
    </location>
</feature>
<feature type="mutagenesis site" description="Impaired microtubule binding and abnormal subcellular localization (e.g. reduced localization in spindle midzone during anaphase) leading to disturbed mitosis; when associated with A-503; A-532; A-540; A-543; A-552; A-573; A-576 and A-586." evidence="10">
    <original>T</original>
    <variation>A</variation>
    <location>
        <position position="526"/>
    </location>
</feature>
<feature type="mutagenesis site" description="Impaired microtubule bindingImpaired microtubule binding and abnormal subcellular localization (e.g. reduced localization in spindle midzone during anaphase) leading to disturbed mitosis; when associated with A-503; A-526; A-540; A-543; A-552; A-573; A-576 and A-586." evidence="10">
    <original>S</original>
    <variation>A</variation>
    <location>
        <position position="532"/>
    </location>
</feature>
<feature type="mutagenesis site" description="Impaired microtubule binding and abnormal subcellular localization (e.g. reduced localization in spindle midzone during anaphase) leading to disturbed mitosis; when associated with A-503; A-526; A-532; A-543; A-552; A-573; A-576 and A-586." evidence="10">
    <original>S</original>
    <variation>A</variation>
    <location>
        <position position="540"/>
    </location>
</feature>
<feature type="mutagenesis site" description="Impaired microtubule binding and abnormal subcellular localization (e.g. reduced localization in spindle midzone during anaphase) leading to disturbed mitosis; when associated with A-503; A-526; A-532; A-540; A-552; A-573; A-576 and A-586." evidence="10">
    <original>T</original>
    <variation>A</variation>
    <location>
        <position position="543"/>
    </location>
</feature>
<feature type="mutagenesis site" description="Impaired microtubule binding and abnormal subcellular localization (e.g. reduced localization in spindle midzone during anaphase); when associated with A-503, A- leading to disturbed mitosis, A-532; A-540; A-543; A-573; A-576 and A-586." evidence="10">
    <original>T</original>
    <variation>A</variation>
    <location>
        <position position="552"/>
    </location>
</feature>
<feature type="mutagenesis site" description="Impaired microtubule binding and abnormal subcellular localization (e.g. reduced localization in spindle midzone during anaphase) leading to disturbed mitosis; when associated with A-503; A-526; A-532; A-540; A-543; A-552; A-576 and A-586." evidence="10">
    <original>S</original>
    <variation>A</variation>
    <location>
        <position position="573"/>
    </location>
</feature>
<feature type="mutagenesis site" description="Impaired microtubule binding and abnormal subcellular localization (e.g. reduced localization in spindle midzone during anaphase) leading to disturbed mitosis; when associated with A-503; A-526; A-532; A-540; A-543; A-552; A-573 and A-586." evidence="10">
    <original>S</original>
    <variation>A</variation>
    <location>
        <position position="576"/>
    </location>
</feature>
<feature type="mutagenesis site" description="Impaired microtubule binding and abnormal subcellular localization (e.g. reduced localization in spindle midzone during anaphase) leading to disturbed mitosis; when associated with A-503; A-526; A-532; A-540; A-543; A-552; A-573 and A-576." evidence="10">
    <original>S</original>
    <variation>A</variation>
    <location>
        <position position="586"/>
    </location>
</feature>
<reference key="1">
    <citation type="journal article" date="1998" name="DNA Res.">
        <title>Structural analysis of Arabidopsis thaliana chromosome 5. IV. Sequence features of the regions of 1,456,315 bp covered by nineteen physically assigned P1 and TAC clones.</title>
        <authorList>
            <person name="Sato S."/>
            <person name="Kaneko T."/>
            <person name="Kotani H."/>
            <person name="Nakamura Y."/>
            <person name="Asamizu E."/>
            <person name="Miyajima N."/>
            <person name="Tabata S."/>
        </authorList>
    </citation>
    <scope>NUCLEOTIDE SEQUENCE [LARGE SCALE GENOMIC DNA]</scope>
    <source>
        <strain>cv. Columbia</strain>
    </source>
</reference>
<reference key="2">
    <citation type="journal article" date="2017" name="Plant J.">
        <title>Araport11: a complete reannotation of the Arabidopsis thaliana reference genome.</title>
        <authorList>
            <person name="Cheng C.Y."/>
            <person name="Krishnakumar V."/>
            <person name="Chan A.P."/>
            <person name="Thibaud-Nissen F."/>
            <person name="Schobel S."/>
            <person name="Town C.D."/>
        </authorList>
    </citation>
    <scope>GENOME REANNOTATION</scope>
    <source>
        <strain>cv. Columbia</strain>
    </source>
</reference>
<reference key="3">
    <citation type="journal article" date="2003" name="Science">
        <title>Empirical analysis of transcriptional activity in the Arabidopsis genome.</title>
        <authorList>
            <person name="Yamada K."/>
            <person name="Lim J."/>
            <person name="Dale J.M."/>
            <person name="Chen H."/>
            <person name="Shinn P."/>
            <person name="Palm C.J."/>
            <person name="Southwick A.M."/>
            <person name="Wu H.C."/>
            <person name="Kim C.J."/>
            <person name="Nguyen M."/>
            <person name="Pham P.K."/>
            <person name="Cheuk R.F."/>
            <person name="Karlin-Newmann G."/>
            <person name="Liu S.X."/>
            <person name="Lam B."/>
            <person name="Sakano H."/>
            <person name="Wu T."/>
            <person name="Yu G."/>
            <person name="Miranda M."/>
            <person name="Quach H.L."/>
            <person name="Tripp M."/>
            <person name="Chang C.H."/>
            <person name="Lee J.M."/>
            <person name="Toriumi M.J."/>
            <person name="Chan M.M."/>
            <person name="Tang C.C."/>
            <person name="Onodera C.S."/>
            <person name="Deng J.M."/>
            <person name="Akiyama K."/>
            <person name="Ansari Y."/>
            <person name="Arakawa T."/>
            <person name="Banh J."/>
            <person name="Banno F."/>
            <person name="Bowser L."/>
            <person name="Brooks S.Y."/>
            <person name="Carninci P."/>
            <person name="Chao Q."/>
            <person name="Choy N."/>
            <person name="Enju A."/>
            <person name="Goldsmith A.D."/>
            <person name="Gurjal M."/>
            <person name="Hansen N.F."/>
            <person name="Hayashizaki Y."/>
            <person name="Johnson-Hopson C."/>
            <person name="Hsuan V.W."/>
            <person name="Iida K."/>
            <person name="Karnes M."/>
            <person name="Khan S."/>
            <person name="Koesema E."/>
            <person name="Ishida J."/>
            <person name="Jiang P.X."/>
            <person name="Jones T."/>
            <person name="Kawai J."/>
            <person name="Kamiya A."/>
            <person name="Meyers C."/>
            <person name="Nakajima M."/>
            <person name="Narusaka M."/>
            <person name="Seki M."/>
            <person name="Sakurai T."/>
            <person name="Satou M."/>
            <person name="Tamse R."/>
            <person name="Vaysberg M."/>
            <person name="Wallender E.K."/>
            <person name="Wong C."/>
            <person name="Yamamura Y."/>
            <person name="Yuan S."/>
            <person name="Shinozaki K."/>
            <person name="Davis R.W."/>
            <person name="Theologis A."/>
            <person name="Ecker J.R."/>
        </authorList>
    </citation>
    <scope>NUCLEOTIDE SEQUENCE [LARGE SCALE MRNA]</scope>
    <source>
        <strain>cv. Columbia</strain>
    </source>
</reference>
<reference key="4">
    <citation type="submission" date="2006-07" db="EMBL/GenBank/DDBJ databases">
        <title>Large-scale analysis of RIKEN Arabidopsis full-length (RAFL) cDNAs.</title>
        <authorList>
            <person name="Totoki Y."/>
            <person name="Seki M."/>
            <person name="Ishida J."/>
            <person name="Nakajima M."/>
            <person name="Enju A."/>
            <person name="Kamiya A."/>
            <person name="Narusaka M."/>
            <person name="Shin-i T."/>
            <person name="Nakagawa M."/>
            <person name="Sakamoto N."/>
            <person name="Oishi K."/>
            <person name="Kohara Y."/>
            <person name="Kobayashi M."/>
            <person name="Toyoda A."/>
            <person name="Sakaki Y."/>
            <person name="Sakurai T."/>
            <person name="Iida K."/>
            <person name="Akiyama K."/>
            <person name="Satou M."/>
            <person name="Toyoda T."/>
            <person name="Konagaya A."/>
            <person name="Carninci P."/>
            <person name="Kawai J."/>
            <person name="Hayashizaki Y."/>
            <person name="Shinozaki K."/>
        </authorList>
    </citation>
    <scope>NUCLEOTIDE SEQUENCE [LARGE SCALE MRNA]</scope>
    <source>
        <strain>cv. Columbia</strain>
    </source>
</reference>
<reference key="5">
    <citation type="journal article" date="2001" name="Plant Cell">
        <title>Role of SH3 domain-containing proteins in clathrin-mediated vesicle trafficking in Arabidopsis.</title>
        <authorList>
            <person name="Lam B.C.-H."/>
            <person name="Sage T.L."/>
            <person name="Bianchi F."/>
            <person name="Blumwald E."/>
        </authorList>
    </citation>
    <scope>INTERACTION WITH SH3P1</scope>
</reference>
<reference key="6">
    <citation type="journal article" date="2002" name="Plant Mol. Biol.">
        <title>The plant cytoskeleton: recent advances in the study of the plant microtubule-associated proteins MAP-65, MAP-190 and the Xenopus MAP215-like protein, MOR1.</title>
        <authorList>
            <person name="Hussey P.J."/>
            <person name="Hawkins T.J."/>
            <person name="Igarashi H."/>
            <person name="Kaloriti D."/>
            <person name="Smertenko A."/>
        </authorList>
    </citation>
    <scope>GENE FAMILY</scope>
    <scope>NOMENCLATURE</scope>
</reference>
<reference key="7">
    <citation type="journal article" date="2004" name="Plant Cell">
        <title>The Arabidopsis microtubule-associated protein AtMAP65-1: molecular analysis of its microtubule bundling activity.</title>
        <authorList>
            <person name="Smertenko A.P."/>
            <person name="Chang H.-Y."/>
            <person name="Wagner V."/>
            <person name="Kaloriti D."/>
            <person name="Fenyk S."/>
            <person name="Sonobe S."/>
            <person name="Lloyd C."/>
            <person name="Hauser M.-T."/>
            <person name="Hussey P.J."/>
        </authorList>
    </citation>
    <scope>INTERACTION WITH MICROTUBULES</scope>
    <scope>SUBCELLULAR LOCATION</scope>
    <scope>TISSUE SPECIFICITY</scope>
    <scope>DIMERIZATION</scope>
    <scope>MUTAGENESIS OF ALA-409 AND ALA-420</scope>
</reference>
<reference key="8">
    <citation type="journal article" date="2004" name="Plant J.">
        <title>Molecular dissection of plant cytokinesis and phragmoplast structure: a survey of GFP-tagged proteins.</title>
        <authorList>
            <person name="Van Damme D."/>
            <person name="Bouget F.-Y."/>
            <person name="Van Poucke K."/>
            <person name="Inze D."/>
            <person name="Geelen D."/>
        </authorList>
    </citation>
    <scope>INTERACTION WITH MICROTUBULES</scope>
    <scope>SUBCELLULAR LOCATION</scope>
</reference>
<reference key="9">
    <citation type="journal article" date="2004" name="Plant Physiol.">
        <title>In vivo dynamics and differential microtubule-binding activities of MAP65 proteins.</title>
        <authorList>
            <person name="Van Damme D."/>
            <person name="Van Poucke K."/>
            <person name="Boutant E."/>
            <person name="Ritzenthaler C."/>
            <person name="Inze D."/>
            <person name="Geelen D."/>
        </authorList>
    </citation>
    <scope>FUNCTION</scope>
    <scope>SUBUNIT</scope>
    <scope>SUBCELLULAR LOCATION</scope>
    <scope>INDUCTION</scope>
</reference>
<reference key="10">
    <citation type="journal article" date="2005" name="J. Cell Sci.">
        <title>Dynamic interaction of NtMAP65-1a with microtubules in vivo.</title>
        <authorList>
            <person name="Chang H.-Y."/>
            <person name="Smertenko A.P."/>
            <person name="Igarashi H."/>
            <person name="Dixon D.P."/>
            <person name="Hussey P.J."/>
        </authorList>
    </citation>
    <scope>FUNCTION</scope>
    <scope>SUBCELLULAR LOCATION</scope>
    <scope>SUBUNIT</scope>
</reference>
<reference key="11">
    <citation type="journal article" date="2005" name="Plant J.">
        <title>Modulated targeting of GFP-AtMAP65-1 to central spindle microtubules during division.</title>
        <authorList>
            <person name="Mao G."/>
            <person name="Chan J."/>
            <person name="Calder G."/>
            <person name="Doonan J.H."/>
            <person name="Lloyd C.W."/>
        </authorList>
    </citation>
    <scope>FUNCTION</scope>
    <scope>SUBCELLULAR LOCATION</scope>
    <scope>SUBUNIT</scope>
    <scope>MUTAGENESIS OF SER-503</scope>
</reference>
<reference key="12">
    <citation type="journal article" date="2005" name="Plant Physiol.">
        <title>Two microtubule-associated proteins of the Arabidopsis MAP65 family function differently on microtubules.</title>
        <authorList>
            <person name="Mao T."/>
            <person name="Jin L."/>
            <person name="Li H."/>
            <person name="Liu B."/>
            <person name="Yuan M."/>
        </authorList>
    </citation>
    <scope>FUNCTION</scope>
    <scope>SUBUNIT</scope>
</reference>
<reference key="13">
    <citation type="journal article" date="2006" name="J. Cell Sci.">
        <title>Control of the AtMAP65-1 interaction with microtubules through the cell cycle.</title>
        <authorList>
            <person name="Smertenko A.P."/>
            <person name="Chang H.-Y."/>
            <person name="Sonobe S."/>
            <person name="Fenyk S.I."/>
            <person name="Weingartner M."/>
            <person name="Boegre L."/>
            <person name="Hussey P.J."/>
        </authorList>
    </citation>
    <scope>FUNCTION</scope>
    <scope>SUBCELLULAR LOCATION</scope>
    <scope>PHOSPHORYLATION AT SER-503; THR-526; SER-532; SER-540; THR-543; THR-552; SER-573; SER-576 AND SER-586</scope>
    <scope>SUBUNIT</scope>
    <scope>MUTAGENESIS OF SER-503; THR-526; SER-532; SER-540; THR-543; THR-552; SER-573; SER-576 AND SER-586</scope>
</reference>
<reference key="14">
    <citation type="journal article" date="2007" name="J. Biochem. Mol. Biol.">
        <title>AtMAP65-1 binds to tubulin dimers to promote tubulin assembly.</title>
        <authorList>
            <person name="Li H."/>
            <person name="Yuan M."/>
            <person name="Mao T."/>
        </authorList>
    </citation>
    <scope>FUNCTION</scope>
    <scope>INTERACTION WITH TUBULIN ALPHA-SUBUNIT</scope>
</reference>
<reference key="15">
    <citation type="journal article" date="2007" name="Plant Cell Physiol.">
        <title>The AtMAP65-1 cross-bridge between microtubules is formed by one dimer.</title>
        <authorList>
            <person name="Li H."/>
            <person name="Mao T."/>
            <person name="Zhang Z."/>
            <person name="Yuan M."/>
        </authorList>
    </citation>
    <scope>SUBUNIT</scope>
</reference>
<reference key="16">
    <citation type="journal article" date="2008" name="Mol. Biol. Cell">
        <title>Two microtubule-associated proteins of Arabidopsis MAP65s promote antiparallel microtubule bundling.</title>
        <authorList>
            <person name="Gaillard J."/>
            <person name="Neumann E."/>
            <person name="Van Damme D."/>
            <person name="Stoppin-Mellet V."/>
            <person name="Ebel C."/>
            <person name="Barbier E."/>
            <person name="Geelen D."/>
            <person name="Vantard M."/>
        </authorList>
    </citation>
    <scope>FUNCTION</scope>
    <scope>SUBCELLULAR LOCATION</scope>
    <scope>SUBUNIT</scope>
</reference>
<reference key="17">
    <citation type="journal article" date="2008" name="Plant Cell">
        <title>The C-terminal variable region specifies the dynamic properties of Arabidopsis microtubule-associated protein MAP65 isotypes.</title>
        <authorList>
            <person name="Smertenko A.P."/>
            <person name="Kaloriti D."/>
            <person name="Chang H.-Y."/>
            <person name="Fiserova J."/>
            <person name="Opatrny Z."/>
            <person name="Hussey P.J."/>
        </authorList>
    </citation>
    <scope>SUBCELLULAR LOCATION</scope>
</reference>
<reference key="18">
    <citation type="journal article" date="2009" name="J. Proteomics">
        <title>Phosphoproteomic analysis of nuclei-enriched fractions from Arabidopsis thaliana.</title>
        <authorList>
            <person name="Jones A.M.E."/>
            <person name="MacLean D."/>
            <person name="Studholme D.J."/>
            <person name="Serna-Sanz A."/>
            <person name="Andreasson E."/>
            <person name="Rathjen J.P."/>
            <person name="Peck S.C."/>
        </authorList>
    </citation>
    <scope>PHOSPHORYLATION [LARGE SCALE ANALYSIS] AT SER-586</scope>
    <scope>IDENTIFICATION BY MASS SPECTROMETRY [LARGE SCALE ANALYSIS]</scope>
    <source>
        <strain>cv. Columbia</strain>
    </source>
</reference>
<reference key="19">
    <citation type="journal article" date="2009" name="Plant Physiol.">
        <title>Large-scale Arabidopsis phosphoproteome profiling reveals novel chloroplast kinase substrates and phosphorylation networks.</title>
        <authorList>
            <person name="Reiland S."/>
            <person name="Messerli G."/>
            <person name="Baerenfaller K."/>
            <person name="Gerrits B."/>
            <person name="Endler A."/>
            <person name="Grossmann J."/>
            <person name="Gruissem W."/>
            <person name="Baginsky S."/>
        </authorList>
    </citation>
    <scope>PHOSPHORYLATION [LARGE SCALE ANALYSIS] AT SER-586</scope>
    <scope>IDENTIFICATION BY MASS SPECTROMETRY [LARGE SCALE ANALYSIS]</scope>
</reference>
<reference key="20">
    <citation type="journal article" date="2010" name="Plant Cell">
        <title>Arabidopsis homologs of nucleus- and phragmoplast-localized kinase 2 and 3 and mitogen-activated protein kinase 4 are essential for microtubule organization.</title>
        <authorList>
            <person name="Beck M."/>
            <person name="Komis G."/>
            <person name="Mueller J."/>
            <person name="Menzel D."/>
            <person name="Samaj J."/>
        </authorList>
    </citation>
    <scope>FUNCTION</scope>
    <scope>PHOSPHORYLATION</scope>
    <scope>INTERACTION WITH MPK4</scope>
</reference>
<comment type="function">
    <text evidence="6 7 8 9 10 11 13 14">Microtubule-associated protein that bundle and stabilize adjacent microtubules (MT) of the cell cortex. Enhances MT nucleation. Can also bind to tubulin dimers and promotes their polymerization. Confers MT resistance to the drug propyzamide and cold conditions. Plays a role in the central spindle at anaphase to early cytokinesis but is not essential at the midline of the phragmoplast at later stages. Represses metaphase spindle organization and the transition to anaphase in dephosphorylated active form. Promotes the formation of a planar network of antiparallel microtubules. May be involved in stomatal movement modulation by regulating the dynamic and arrangement of cortical MT.</text>
</comment>
<comment type="subunit">
    <text evidence="3 4 5 6 7 8 9 10 11 12 13 14">Forms dimer. Binds to MT, mostly with coaligned MT, both between parallel or antiparallel, forming thick bundles. Interacts with the alpha-tubulin subunit of the tubulin heterodimer. Bundles polymerized MT via the formation of 25-nm crossbridges at specific stages of the cell cycle (e.g. bundles microtubules in interphase, anaphase and telophase but does not bind microtubules in prophase or metaphase), at the plus-end, the minus-end, or along the entire length of MT, and along phragmoplast MT. Interacts with SH3P1 and MPK4.</text>
</comment>
<comment type="subcellular location">
    <subcellularLocation>
        <location>Nucleus</location>
    </subcellularLocation>
    <subcellularLocation>
        <location>Cytoplasm</location>
    </subcellularLocation>
    <subcellularLocation>
        <location>Cytoplasm</location>
        <location>Cytoskeleton</location>
        <location>Spindle</location>
    </subcellularLocation>
    <subcellularLocation>
        <location>Cytoplasm</location>
        <location>Cytoskeleton</location>
        <location>Phragmoplast</location>
    </subcellularLocation>
    <subcellularLocation>
        <location>Cytoplasm</location>
        <location>Cell cortex</location>
    </subcellularLocation>
    <text>During interphase, binds cortical microtubules. In M-phase, locates to the preprophase band. Binds the preprophase band but does not accumulate at the prophase spindle microtubules that coexists within the same cell. In the metaphase and anaphase, localized to spindle. In the phragmoplast, concentrated at the midzone where vesicles guide by MT coalesce to form the cell plate. Present in MT cortical arrays. Concentrated in dots surrounding the nuclei.</text>
</comment>
<comment type="alternative products">
    <event type="alternative splicing"/>
    <isoform>
        <id>Q9FLP0-1</id>
        <name>1</name>
        <sequence type="displayed"/>
    </isoform>
    <text>A number of isoforms are produced. According to EST sequences.</text>
</comment>
<comment type="tissue specificity">
    <text evidence="4">Expressed in all organs and tissues with the exception of sepals and anthers. Bound to subsets of microtubules in the cells of root epidermis, hypocotyl and cotyledons (at protein level).</text>
</comment>
<comment type="induction">
    <text evidence="6">Expressed throughout the cell cycle.</text>
</comment>
<comment type="PTM">
    <text evidence="10 14">Basal phosphorylation at all stages of the cell cycle. MT-binding properties inhibited by hyperphosphorylation mediated by CDKs and/or MAPKs (e.g. ANP2, ANP3, MPK4 and MPK6) during prometaphase and metaphase.</text>
</comment>
<comment type="similarity">
    <text evidence="15">Belongs to the MAP65/ASE1 family.</text>
</comment>
<sequence>MAVTDTESPHLGEITCGTLLEKLQEIWDEVGESDDERDKLLLQIEQECLDVYKRKVEQAAKSRAELLQTLSDANAELSSLTMSLGDKSLVGIPDKSSGTIKEQLAAIAPALEQLWQQKEERVREFSDVQSQIQKICGDIAGGLSNEVPIVDESDLSLKKLDDFQSQLQELQKEKSDRLRKVLEFVSTVHDLCAVLGLDFLSTVTEVHPSLDEDTSVQSKSISNETLSRLAKTVLTLKDDKKQRLQKLQELATQLIDLWNLMDTPDEERELFDHVTCNISSSVDEVTVPGALARDLIEQAEVEVDRLDQLKASRMKEIAFKKQSELEEIYARAHVEVNPESARERIMSLIDSGNVEPTELLADMDSQISKAKEEAFSRKDILDRVEKWMSACEEESWLEDYNRDQNRYSASRGAHLNLKRAEKARILVSKIPAMVDTLVAKTRAWEEEHSMSFAYDGVPLLAMLDEYGMLRQEREEEKRRLREQKKVQEQPHVEQESAFSTRPSPARPVSAKKTVGPRANNGGANGTHNRRLSLNANQNGSRSTAKEAGRRETLNRPAAPTNYVAISKEEAASSPVSGAADHQVPASP</sequence>
<organism>
    <name type="scientific">Arabidopsis thaliana</name>
    <name type="common">Mouse-ear cress</name>
    <dbReference type="NCBI Taxonomy" id="3702"/>
    <lineage>
        <taxon>Eukaryota</taxon>
        <taxon>Viridiplantae</taxon>
        <taxon>Streptophyta</taxon>
        <taxon>Embryophyta</taxon>
        <taxon>Tracheophyta</taxon>
        <taxon>Spermatophyta</taxon>
        <taxon>Magnoliopsida</taxon>
        <taxon>eudicotyledons</taxon>
        <taxon>Gunneridae</taxon>
        <taxon>Pentapetalae</taxon>
        <taxon>rosids</taxon>
        <taxon>malvids</taxon>
        <taxon>Brassicales</taxon>
        <taxon>Brassicaceae</taxon>
        <taxon>Camelineae</taxon>
        <taxon>Arabidopsis</taxon>
    </lineage>
</organism>
<proteinExistence type="evidence at protein level"/>
<keyword id="KW-0025">Alternative splicing</keyword>
<keyword id="KW-0131">Cell cycle</keyword>
<keyword id="KW-0132">Cell division</keyword>
<keyword id="KW-0175">Coiled coil</keyword>
<keyword id="KW-0963">Cytoplasm</keyword>
<keyword id="KW-0206">Cytoskeleton</keyword>
<keyword id="KW-0493">Microtubule</keyword>
<keyword id="KW-0498">Mitosis</keyword>
<keyword id="KW-0539">Nucleus</keyword>
<keyword id="KW-0597">Phosphoprotein</keyword>
<keyword id="KW-1185">Reference proteome</keyword>
<name>MA651_ARATH</name>
<dbReference type="EMBL" id="AB010071">
    <property type="protein sequence ID" value="BAB08592.1"/>
    <property type="molecule type" value="Genomic_DNA"/>
</dbReference>
<dbReference type="EMBL" id="CP002688">
    <property type="protein sequence ID" value="AED96602.1"/>
    <property type="molecule type" value="Genomic_DNA"/>
</dbReference>
<dbReference type="EMBL" id="CP002688">
    <property type="protein sequence ID" value="ANM70602.1"/>
    <property type="molecule type" value="Genomic_DNA"/>
</dbReference>
<dbReference type="EMBL" id="BT004641">
    <property type="protein sequence ID" value="AAO42887.1"/>
    <property type="molecule type" value="mRNA"/>
</dbReference>
<dbReference type="EMBL" id="AK227916">
    <property type="protein sequence ID" value="BAE99886.1"/>
    <property type="molecule type" value="mRNA"/>
</dbReference>
<dbReference type="RefSeq" id="NP_001332196.1">
    <molecule id="Q9FLP0-1"/>
    <property type="nucleotide sequence ID" value="NM_001345120.1"/>
</dbReference>
<dbReference type="RefSeq" id="NP_200334.1">
    <molecule id="Q9FLP0-1"/>
    <property type="nucleotide sequence ID" value="NM_124905.5"/>
</dbReference>
<dbReference type="SMR" id="Q9FLP0"/>
<dbReference type="FunCoup" id="Q9FLP0">
    <property type="interactions" value="2658"/>
</dbReference>
<dbReference type="STRING" id="3702.Q9FLP0"/>
<dbReference type="iPTMnet" id="Q9FLP0"/>
<dbReference type="PaxDb" id="3702-AT5G55230.2"/>
<dbReference type="ProteomicsDB" id="238839">
    <molecule id="Q9FLP0-1"/>
</dbReference>
<dbReference type="EnsemblPlants" id="AT5G55230.1">
    <molecule id="Q9FLP0-1"/>
    <property type="protein sequence ID" value="AT5G55230.1"/>
    <property type="gene ID" value="AT5G55230"/>
</dbReference>
<dbReference type="EnsemblPlants" id="AT5G55230.3">
    <molecule id="Q9FLP0-1"/>
    <property type="protein sequence ID" value="AT5G55230.3"/>
    <property type="gene ID" value="AT5G55230"/>
</dbReference>
<dbReference type="GeneID" id="835616"/>
<dbReference type="Gramene" id="AT5G55230.1">
    <molecule id="Q9FLP0-1"/>
    <property type="protein sequence ID" value="AT5G55230.1"/>
    <property type="gene ID" value="AT5G55230"/>
</dbReference>
<dbReference type="Gramene" id="AT5G55230.3">
    <molecule id="Q9FLP0-1"/>
    <property type="protein sequence ID" value="AT5G55230.3"/>
    <property type="gene ID" value="AT5G55230"/>
</dbReference>
<dbReference type="KEGG" id="ath:AT5G55230"/>
<dbReference type="Araport" id="AT5G55230"/>
<dbReference type="TAIR" id="AT5G55230">
    <property type="gene designation" value="MAP65-1"/>
</dbReference>
<dbReference type="eggNOG" id="KOG4302">
    <property type="taxonomic scope" value="Eukaryota"/>
</dbReference>
<dbReference type="InParanoid" id="Q9FLP0"/>
<dbReference type="OMA" id="QLHGIYD"/>
<dbReference type="PhylomeDB" id="Q9FLP0"/>
<dbReference type="CD-CODE" id="33FCD62D">
    <property type="entry name" value="Centrosome"/>
</dbReference>
<dbReference type="PRO" id="PR:Q9FLP0"/>
<dbReference type="Proteomes" id="UP000006548">
    <property type="component" value="Chromosome 5"/>
</dbReference>
<dbReference type="ExpressionAtlas" id="Q9FLP0">
    <property type="expression patterns" value="baseline and differential"/>
</dbReference>
<dbReference type="GO" id="GO:0005938">
    <property type="term" value="C:cell cortex"/>
    <property type="evidence" value="ECO:0007669"/>
    <property type="project" value="UniProtKB-SubCell"/>
</dbReference>
<dbReference type="GO" id="GO:0005874">
    <property type="term" value="C:microtubule"/>
    <property type="evidence" value="ECO:0007669"/>
    <property type="project" value="UniProtKB-KW"/>
</dbReference>
<dbReference type="GO" id="GO:0005634">
    <property type="term" value="C:nucleus"/>
    <property type="evidence" value="ECO:0007669"/>
    <property type="project" value="UniProtKB-SubCell"/>
</dbReference>
<dbReference type="GO" id="GO:0009524">
    <property type="term" value="C:phragmoplast"/>
    <property type="evidence" value="ECO:0007669"/>
    <property type="project" value="UniProtKB-SubCell"/>
</dbReference>
<dbReference type="GO" id="GO:0005819">
    <property type="term" value="C:spindle"/>
    <property type="evidence" value="ECO:0007669"/>
    <property type="project" value="UniProtKB-SubCell"/>
</dbReference>
<dbReference type="GO" id="GO:0008017">
    <property type="term" value="F:microtubule binding"/>
    <property type="evidence" value="ECO:0007669"/>
    <property type="project" value="InterPro"/>
</dbReference>
<dbReference type="GO" id="GO:0046983">
    <property type="term" value="F:protein dimerization activity"/>
    <property type="evidence" value="ECO:0000353"/>
    <property type="project" value="UniProtKB"/>
</dbReference>
<dbReference type="GO" id="GO:0051301">
    <property type="term" value="P:cell division"/>
    <property type="evidence" value="ECO:0007669"/>
    <property type="project" value="UniProtKB-KW"/>
</dbReference>
<dbReference type="GO" id="GO:0043622">
    <property type="term" value="P:cortical microtubule organization"/>
    <property type="evidence" value="ECO:0000315"/>
    <property type="project" value="UniProtKB"/>
</dbReference>
<dbReference type="FunFam" id="1.20.58.1520:FF:000002">
    <property type="entry name" value="65-kDa microtubule-associated protein 6"/>
    <property type="match status" value="1"/>
</dbReference>
<dbReference type="Gene3D" id="1.20.58.1520">
    <property type="match status" value="1"/>
</dbReference>
<dbReference type="Gene3D" id="6.10.140.180">
    <property type="match status" value="1"/>
</dbReference>
<dbReference type="InterPro" id="IPR007145">
    <property type="entry name" value="MAP65_Ase1_PRC1"/>
</dbReference>
<dbReference type="PANTHER" id="PTHR19321:SF41">
    <property type="entry name" value="FASCETTO-RELATED"/>
    <property type="match status" value="1"/>
</dbReference>
<dbReference type="PANTHER" id="PTHR19321">
    <property type="entry name" value="PROTEIN REGULATOR OF CYTOKINESIS 1 PRC1-RELATED"/>
    <property type="match status" value="1"/>
</dbReference>
<dbReference type="Pfam" id="PF03999">
    <property type="entry name" value="MAP65_ASE1"/>
    <property type="match status" value="1"/>
</dbReference>